<protein>
    <recommendedName>
        <fullName evidence="1">7-cyano-7-deazaguanine synthase</fullName>
        <ecNumber evidence="1">6.3.4.20</ecNumber>
    </recommendedName>
    <alternativeName>
        <fullName evidence="1">7-cyano-7-carbaguanine synthase</fullName>
    </alternativeName>
    <alternativeName>
        <fullName evidence="1">PreQ(0) synthase</fullName>
    </alternativeName>
    <alternativeName>
        <fullName evidence="1">Queuosine biosynthesis protein QueC</fullName>
    </alternativeName>
</protein>
<accession>C1D6L0</accession>
<name>QUEC_LARHH</name>
<reference key="1">
    <citation type="journal article" date="2009" name="PLoS Genet.">
        <title>The complete genome and proteome of Laribacter hongkongensis reveal potential mechanisms for adaptations to different temperatures and habitats.</title>
        <authorList>
            <person name="Woo P.C.Y."/>
            <person name="Lau S.K.P."/>
            <person name="Tse H."/>
            <person name="Teng J.L.L."/>
            <person name="Curreem S.O."/>
            <person name="Tsang A.K.L."/>
            <person name="Fan R.Y.Y."/>
            <person name="Wong G.K.M."/>
            <person name="Huang Y."/>
            <person name="Loman N.J."/>
            <person name="Snyder L.A.S."/>
            <person name="Cai J.J."/>
            <person name="Huang J.-D."/>
            <person name="Mak W."/>
            <person name="Pallen M.J."/>
            <person name="Lok S."/>
            <person name="Yuen K.-Y."/>
        </authorList>
    </citation>
    <scope>NUCLEOTIDE SEQUENCE [LARGE SCALE GENOMIC DNA]</scope>
    <source>
        <strain>HLHK9</strain>
    </source>
</reference>
<dbReference type="EC" id="6.3.4.20" evidence="1"/>
<dbReference type="EMBL" id="CP001154">
    <property type="protein sequence ID" value="ACO74117.1"/>
    <property type="molecule type" value="Genomic_DNA"/>
</dbReference>
<dbReference type="RefSeq" id="WP_012696607.1">
    <property type="nucleotide sequence ID" value="NC_012559.1"/>
</dbReference>
<dbReference type="SMR" id="C1D6L0"/>
<dbReference type="STRING" id="557598.LHK_01125"/>
<dbReference type="GeneID" id="75109271"/>
<dbReference type="KEGG" id="lhk:LHK_01125"/>
<dbReference type="eggNOG" id="COG0603">
    <property type="taxonomic scope" value="Bacteria"/>
</dbReference>
<dbReference type="HOGENOM" id="CLU_081854_0_0_4"/>
<dbReference type="UniPathway" id="UPA00391"/>
<dbReference type="Proteomes" id="UP000002010">
    <property type="component" value="Chromosome"/>
</dbReference>
<dbReference type="GO" id="GO:0005524">
    <property type="term" value="F:ATP binding"/>
    <property type="evidence" value="ECO:0007669"/>
    <property type="project" value="UniProtKB-UniRule"/>
</dbReference>
<dbReference type="GO" id="GO:0016879">
    <property type="term" value="F:ligase activity, forming carbon-nitrogen bonds"/>
    <property type="evidence" value="ECO:0007669"/>
    <property type="project" value="UniProtKB-UniRule"/>
</dbReference>
<dbReference type="GO" id="GO:0008270">
    <property type="term" value="F:zinc ion binding"/>
    <property type="evidence" value="ECO:0007669"/>
    <property type="project" value="UniProtKB-UniRule"/>
</dbReference>
<dbReference type="GO" id="GO:0008616">
    <property type="term" value="P:queuosine biosynthetic process"/>
    <property type="evidence" value="ECO:0007669"/>
    <property type="project" value="UniProtKB-UniRule"/>
</dbReference>
<dbReference type="CDD" id="cd01995">
    <property type="entry name" value="QueC-like"/>
    <property type="match status" value="1"/>
</dbReference>
<dbReference type="Gene3D" id="3.40.50.620">
    <property type="entry name" value="HUPs"/>
    <property type="match status" value="1"/>
</dbReference>
<dbReference type="HAMAP" id="MF_01633">
    <property type="entry name" value="QueC"/>
    <property type="match status" value="1"/>
</dbReference>
<dbReference type="InterPro" id="IPR018317">
    <property type="entry name" value="QueC"/>
</dbReference>
<dbReference type="InterPro" id="IPR014729">
    <property type="entry name" value="Rossmann-like_a/b/a_fold"/>
</dbReference>
<dbReference type="NCBIfam" id="TIGR00364">
    <property type="entry name" value="7-cyano-7-deazaguanine synthase QueC"/>
    <property type="match status" value="1"/>
</dbReference>
<dbReference type="PANTHER" id="PTHR42914">
    <property type="entry name" value="7-CYANO-7-DEAZAGUANINE SYNTHASE"/>
    <property type="match status" value="1"/>
</dbReference>
<dbReference type="PANTHER" id="PTHR42914:SF1">
    <property type="entry name" value="7-CYANO-7-DEAZAGUANINE SYNTHASE"/>
    <property type="match status" value="1"/>
</dbReference>
<dbReference type="Pfam" id="PF06508">
    <property type="entry name" value="QueC"/>
    <property type="match status" value="1"/>
</dbReference>
<dbReference type="PIRSF" id="PIRSF006293">
    <property type="entry name" value="ExsB"/>
    <property type="match status" value="1"/>
</dbReference>
<dbReference type="SUPFAM" id="SSF52402">
    <property type="entry name" value="Adenine nucleotide alpha hydrolases-like"/>
    <property type="match status" value="1"/>
</dbReference>
<evidence type="ECO:0000255" key="1">
    <source>
        <dbReference type="HAMAP-Rule" id="MF_01633"/>
    </source>
</evidence>
<sequence length="229" mass="24505">MDSLRDPEHALVVLSGGQDSTTCLYWALSRFAQVSAISFDYGQRHRVELDAARTIAAMAGVGHTIIPINTFSALGGNALTDQQMSPDTGPDAETLLPNTFVPGRNLVFLTFAAAWAWPRGIRHIVTGVAQTDYSGYPDCRENTLRALELAINLGMESRMRLHMPLMFLSKADTVTLARTVGAMPALAFSHTCYAGAVPPCGQCAACVLRAKGFAEAGIPDPLLNRLAGV</sequence>
<organism>
    <name type="scientific">Laribacter hongkongensis (strain HLHK9)</name>
    <dbReference type="NCBI Taxonomy" id="557598"/>
    <lineage>
        <taxon>Bacteria</taxon>
        <taxon>Pseudomonadati</taxon>
        <taxon>Pseudomonadota</taxon>
        <taxon>Betaproteobacteria</taxon>
        <taxon>Neisseriales</taxon>
        <taxon>Aquaspirillaceae</taxon>
        <taxon>Laribacter</taxon>
    </lineage>
</organism>
<keyword id="KW-0067">ATP-binding</keyword>
<keyword id="KW-0436">Ligase</keyword>
<keyword id="KW-0479">Metal-binding</keyword>
<keyword id="KW-0547">Nucleotide-binding</keyword>
<keyword id="KW-0671">Queuosine biosynthesis</keyword>
<keyword id="KW-1185">Reference proteome</keyword>
<keyword id="KW-0862">Zinc</keyword>
<gene>
    <name evidence="1" type="primary">queC</name>
    <name type="ordered locus">LHK_01125</name>
</gene>
<proteinExistence type="inferred from homology"/>
<comment type="function">
    <text evidence="1">Catalyzes the ATP-dependent conversion of 7-carboxy-7-deazaguanine (CDG) to 7-cyano-7-deazaguanine (preQ(0)).</text>
</comment>
<comment type="catalytic activity">
    <reaction evidence="1">
        <text>7-carboxy-7-deazaguanine + NH4(+) + ATP = 7-cyano-7-deazaguanine + ADP + phosphate + H2O + H(+)</text>
        <dbReference type="Rhea" id="RHEA:27982"/>
        <dbReference type="ChEBI" id="CHEBI:15377"/>
        <dbReference type="ChEBI" id="CHEBI:15378"/>
        <dbReference type="ChEBI" id="CHEBI:28938"/>
        <dbReference type="ChEBI" id="CHEBI:30616"/>
        <dbReference type="ChEBI" id="CHEBI:43474"/>
        <dbReference type="ChEBI" id="CHEBI:45075"/>
        <dbReference type="ChEBI" id="CHEBI:61036"/>
        <dbReference type="ChEBI" id="CHEBI:456216"/>
        <dbReference type="EC" id="6.3.4.20"/>
    </reaction>
</comment>
<comment type="cofactor">
    <cofactor evidence="1">
        <name>Zn(2+)</name>
        <dbReference type="ChEBI" id="CHEBI:29105"/>
    </cofactor>
    <text evidence="1">Binds 1 zinc ion per subunit.</text>
</comment>
<comment type="pathway">
    <text evidence="1">Purine metabolism; 7-cyano-7-deazaguanine biosynthesis.</text>
</comment>
<comment type="similarity">
    <text evidence="1">Belongs to the QueC family.</text>
</comment>
<feature type="chain" id="PRO_1000186608" description="7-cyano-7-deazaguanine synthase">
    <location>
        <begin position="1"/>
        <end position="229"/>
    </location>
</feature>
<feature type="binding site" evidence="1">
    <location>
        <begin position="14"/>
        <end position="24"/>
    </location>
    <ligand>
        <name>ATP</name>
        <dbReference type="ChEBI" id="CHEBI:30616"/>
    </ligand>
</feature>
<feature type="binding site" evidence="1">
    <location>
        <position position="192"/>
    </location>
    <ligand>
        <name>Zn(2+)</name>
        <dbReference type="ChEBI" id="CHEBI:29105"/>
    </ligand>
</feature>
<feature type="binding site" evidence="1">
    <location>
        <position position="200"/>
    </location>
    <ligand>
        <name>Zn(2+)</name>
        <dbReference type="ChEBI" id="CHEBI:29105"/>
    </ligand>
</feature>
<feature type="binding site" evidence="1">
    <location>
        <position position="203"/>
    </location>
    <ligand>
        <name>Zn(2+)</name>
        <dbReference type="ChEBI" id="CHEBI:29105"/>
    </ligand>
</feature>
<feature type="binding site" evidence="1">
    <location>
        <position position="206"/>
    </location>
    <ligand>
        <name>Zn(2+)</name>
        <dbReference type="ChEBI" id="CHEBI:29105"/>
    </ligand>
</feature>